<name>HBB_ORNAN</name>
<comment type="function">
    <text>Involved in oxygen transport from the lung to the various peripheral tissues.</text>
</comment>
<comment type="subunit">
    <text>Heterotetramer of two alpha chains and two beta chains.</text>
</comment>
<comment type="tissue specificity">
    <text>Red blood cells.</text>
</comment>
<comment type="similarity">
    <text evidence="3">Belongs to the globin family.</text>
</comment>
<sequence>VHLSGGEKSAVTNLWGKVNINELGGEALGRLLVVYPWTQRFFEAFGDLSSAGAVMGNPKVKAHGAKVLTSFGDALKNLDDLKGTFAKLSELHCDKLHVDPENFNRLGNVLIVVLARHFSKDFSPEVQAAWQKLVSGVAHALGHKYH</sequence>
<organism>
    <name type="scientific">Ornithorhynchus anatinus</name>
    <name type="common">Duckbill platypus</name>
    <dbReference type="NCBI Taxonomy" id="9258"/>
    <lineage>
        <taxon>Eukaryota</taxon>
        <taxon>Metazoa</taxon>
        <taxon>Chordata</taxon>
        <taxon>Craniata</taxon>
        <taxon>Vertebrata</taxon>
        <taxon>Euteleostomi</taxon>
        <taxon>Mammalia</taxon>
        <taxon>Monotremata</taxon>
        <taxon>Ornithorhynchidae</taxon>
        <taxon>Ornithorhynchus</taxon>
    </lineage>
</organism>
<gene>
    <name type="primary">HBB</name>
</gene>
<feature type="chain" id="PRO_0000053043" description="Hemoglobin subunit beta">
    <location>
        <begin position="1"/>
        <end position="146"/>
    </location>
</feature>
<feature type="domain" description="Globin" evidence="3">
    <location>
        <begin position="2"/>
        <end position="146"/>
    </location>
</feature>
<feature type="binding site" description="distal binding residue">
    <location>
        <position position="63"/>
    </location>
    <ligand>
        <name>heme b</name>
        <dbReference type="ChEBI" id="CHEBI:60344"/>
    </ligand>
    <ligandPart>
        <name>Fe</name>
        <dbReference type="ChEBI" id="CHEBI:18248"/>
    </ligandPart>
</feature>
<feature type="binding site" description="proximal binding residue">
    <location>
        <position position="92"/>
    </location>
    <ligand>
        <name>heme b</name>
        <dbReference type="ChEBI" id="CHEBI:60344"/>
    </ligand>
    <ligandPart>
        <name>Fe</name>
        <dbReference type="ChEBI" id="CHEBI:18248"/>
    </ligandPart>
</feature>
<feature type="modified residue" description="N-acetylvaline" evidence="1">
    <location>
        <position position="1"/>
    </location>
</feature>
<feature type="modified residue" description="Phosphothreonine" evidence="2">
    <location>
        <position position="12"/>
    </location>
</feature>
<feature type="modified residue" description="N6-acetyllysine" evidence="2">
    <location>
        <position position="59"/>
    </location>
</feature>
<feature type="modified residue" description="N6-acetyllysine" evidence="2">
    <location>
        <position position="82"/>
    </location>
</feature>
<feature type="modified residue" description="S-nitrosocysteine" evidence="2">
    <location>
        <position position="93"/>
    </location>
</feature>
<feature type="modified residue" description="N6-acetyllysine" evidence="2">
    <location>
        <position position="144"/>
    </location>
</feature>
<accession>P02111</accession>
<reference key="1">
    <citation type="journal article" date="1975" name="Aust. J. Biol. Sci.">
        <title>Studies on monotreme proteins. VI. Amino acid sequence of the beta-chain of haemoglobin from the platypus, Ornithorhynchus anatinus.</title>
        <authorList>
            <person name="Whittaker R.G."/>
            <person name="Thompson E.O.P."/>
        </authorList>
    </citation>
    <scope>PROTEIN SEQUENCE</scope>
</reference>
<dbReference type="PIR" id="A02431">
    <property type="entry name" value="HBOR"/>
</dbReference>
<dbReference type="SMR" id="P02111"/>
<dbReference type="STRING" id="9258.ENSOANP00000003845"/>
<dbReference type="InParanoid" id="P02111"/>
<dbReference type="OMA" id="LWGQIDV"/>
<dbReference type="Proteomes" id="UP000002279">
    <property type="component" value="Unplaced"/>
</dbReference>
<dbReference type="GO" id="GO:0031838">
    <property type="term" value="C:haptoglobin-hemoglobin complex"/>
    <property type="evidence" value="ECO:0000318"/>
    <property type="project" value="GO_Central"/>
</dbReference>
<dbReference type="GO" id="GO:0005833">
    <property type="term" value="C:hemoglobin complex"/>
    <property type="evidence" value="ECO:0000318"/>
    <property type="project" value="GO_Central"/>
</dbReference>
<dbReference type="GO" id="GO:0020037">
    <property type="term" value="F:heme binding"/>
    <property type="evidence" value="ECO:0000318"/>
    <property type="project" value="GO_Central"/>
</dbReference>
<dbReference type="GO" id="GO:0046872">
    <property type="term" value="F:metal ion binding"/>
    <property type="evidence" value="ECO:0007669"/>
    <property type="project" value="UniProtKB-KW"/>
</dbReference>
<dbReference type="GO" id="GO:0019825">
    <property type="term" value="F:oxygen binding"/>
    <property type="evidence" value="ECO:0000318"/>
    <property type="project" value="GO_Central"/>
</dbReference>
<dbReference type="GO" id="GO:0005344">
    <property type="term" value="F:oxygen carrier activity"/>
    <property type="evidence" value="ECO:0000318"/>
    <property type="project" value="GO_Central"/>
</dbReference>
<dbReference type="GO" id="GO:0098869">
    <property type="term" value="P:cellular oxidant detoxification"/>
    <property type="evidence" value="ECO:0007669"/>
    <property type="project" value="GOC"/>
</dbReference>
<dbReference type="GO" id="GO:0042744">
    <property type="term" value="P:hydrogen peroxide catabolic process"/>
    <property type="evidence" value="ECO:0000318"/>
    <property type="project" value="GO_Central"/>
</dbReference>
<dbReference type="CDD" id="cd08925">
    <property type="entry name" value="Hb-beta-like"/>
    <property type="match status" value="1"/>
</dbReference>
<dbReference type="FunFam" id="1.10.490.10:FF:000001">
    <property type="entry name" value="Hemoglobin subunit beta"/>
    <property type="match status" value="1"/>
</dbReference>
<dbReference type="Gene3D" id="1.10.490.10">
    <property type="entry name" value="Globins"/>
    <property type="match status" value="1"/>
</dbReference>
<dbReference type="InterPro" id="IPR000971">
    <property type="entry name" value="Globin"/>
</dbReference>
<dbReference type="InterPro" id="IPR009050">
    <property type="entry name" value="Globin-like_sf"/>
</dbReference>
<dbReference type="InterPro" id="IPR012292">
    <property type="entry name" value="Globin/Proto"/>
</dbReference>
<dbReference type="InterPro" id="IPR002337">
    <property type="entry name" value="Hemoglobin_b"/>
</dbReference>
<dbReference type="InterPro" id="IPR050056">
    <property type="entry name" value="Hemoglobin_oxygen_transport"/>
</dbReference>
<dbReference type="PANTHER" id="PTHR11442">
    <property type="entry name" value="HEMOGLOBIN FAMILY MEMBER"/>
    <property type="match status" value="1"/>
</dbReference>
<dbReference type="PANTHER" id="PTHR11442:SF7">
    <property type="entry name" value="HEMOGLOBIN SUBUNIT EPSILON"/>
    <property type="match status" value="1"/>
</dbReference>
<dbReference type="Pfam" id="PF00042">
    <property type="entry name" value="Globin"/>
    <property type="match status" value="1"/>
</dbReference>
<dbReference type="PRINTS" id="PR00814">
    <property type="entry name" value="BETAHAEM"/>
</dbReference>
<dbReference type="SUPFAM" id="SSF46458">
    <property type="entry name" value="Globin-like"/>
    <property type="match status" value="1"/>
</dbReference>
<dbReference type="PROSITE" id="PS01033">
    <property type="entry name" value="GLOBIN"/>
    <property type="match status" value="1"/>
</dbReference>
<evidence type="ECO:0000250" key="1">
    <source>
        <dbReference type="UniProtKB" id="P02086"/>
    </source>
</evidence>
<evidence type="ECO:0000250" key="2">
    <source>
        <dbReference type="UniProtKB" id="P68871"/>
    </source>
</evidence>
<evidence type="ECO:0000255" key="3">
    <source>
        <dbReference type="PROSITE-ProRule" id="PRU00238"/>
    </source>
</evidence>
<keyword id="KW-0007">Acetylation</keyword>
<keyword id="KW-0903">Direct protein sequencing</keyword>
<keyword id="KW-0349">Heme</keyword>
<keyword id="KW-0408">Iron</keyword>
<keyword id="KW-0479">Metal-binding</keyword>
<keyword id="KW-0561">Oxygen transport</keyword>
<keyword id="KW-0597">Phosphoprotein</keyword>
<keyword id="KW-1185">Reference proteome</keyword>
<keyword id="KW-0702">S-nitrosylation</keyword>
<keyword id="KW-0813">Transport</keyword>
<proteinExistence type="evidence at protein level"/>
<protein>
    <recommendedName>
        <fullName>Hemoglobin subunit beta</fullName>
    </recommendedName>
    <alternativeName>
        <fullName>Beta-globin</fullName>
    </alternativeName>
    <alternativeName>
        <fullName>Hemoglobin beta chain</fullName>
    </alternativeName>
</protein>